<proteinExistence type="evidence at protein level"/>
<protein>
    <recommendedName>
        <fullName>Guanyl-specific ribonuclease Sa3</fullName>
        <shortName>RNase Sa3</shortName>
        <ecNumber>4.6.1.24</ecNumber>
    </recommendedName>
</protein>
<sequence>MRIPPRLVALAGAAAVAATLIAGPVAAAAPASHAVAASSAASASVKAVGRVCYSALPSQAHDTLDLIDEGGPFPYSQDGVVFQNREGLLPAHSTGYYHEYTVITPGSPTRGARRIITGQQWQEDYYTADHYASFRRVDFAC</sequence>
<evidence type="ECO:0000250" key="1"/>
<evidence type="ECO:0000255" key="2"/>
<evidence type="ECO:0000305" key="3"/>
<evidence type="ECO:0007829" key="4">
    <source>
        <dbReference type="PDB" id="1MGR"/>
    </source>
</evidence>
<name>RNS3_KITAU</name>
<dbReference type="EC" id="4.6.1.24"/>
<dbReference type="EMBL" id="M82920">
    <property type="protein sequence ID" value="AAA26809.1"/>
    <property type="status" value="ALT_FRAME"/>
    <property type="molecule type" value="Genomic_DNA"/>
</dbReference>
<dbReference type="PIR" id="JC1287">
    <property type="entry name" value="JC1287"/>
</dbReference>
<dbReference type="PDB" id="1MGR">
    <property type="method" value="X-ray"/>
    <property type="resolution" value="1.70 A"/>
    <property type="chains" value="A=43-141"/>
</dbReference>
<dbReference type="PDB" id="1MGW">
    <property type="method" value="X-ray"/>
    <property type="resolution" value="2.00 A"/>
    <property type="chains" value="A=43-141"/>
</dbReference>
<dbReference type="PDBsum" id="1MGR"/>
<dbReference type="PDBsum" id="1MGW"/>
<dbReference type="SMR" id="P30289"/>
<dbReference type="EvolutionaryTrace" id="P30289"/>
<dbReference type="GO" id="GO:0005576">
    <property type="term" value="C:extracellular region"/>
    <property type="evidence" value="ECO:0007669"/>
    <property type="project" value="UniProtKB-SubCell"/>
</dbReference>
<dbReference type="GO" id="GO:0016829">
    <property type="term" value="F:lyase activity"/>
    <property type="evidence" value="ECO:0007669"/>
    <property type="project" value="UniProtKB-KW"/>
</dbReference>
<dbReference type="GO" id="GO:0046589">
    <property type="term" value="F:ribonuclease T1 activity"/>
    <property type="evidence" value="ECO:0007669"/>
    <property type="project" value="UniProtKB-EC"/>
</dbReference>
<dbReference type="GO" id="GO:0003723">
    <property type="term" value="F:RNA binding"/>
    <property type="evidence" value="ECO:0007669"/>
    <property type="project" value="InterPro"/>
</dbReference>
<dbReference type="GO" id="GO:0004521">
    <property type="term" value="F:RNA endonuclease activity"/>
    <property type="evidence" value="ECO:0007669"/>
    <property type="project" value="InterPro"/>
</dbReference>
<dbReference type="Gene3D" id="3.10.450.30">
    <property type="entry name" value="Microbial ribonucleases"/>
    <property type="match status" value="1"/>
</dbReference>
<dbReference type="InterPro" id="IPR000026">
    <property type="entry name" value="N1-like"/>
</dbReference>
<dbReference type="InterPro" id="IPR016191">
    <property type="entry name" value="Ribonuclease/ribotoxin"/>
</dbReference>
<dbReference type="Pfam" id="PF00545">
    <property type="entry name" value="Ribonuclease"/>
    <property type="match status" value="1"/>
</dbReference>
<dbReference type="SUPFAM" id="SSF53933">
    <property type="entry name" value="Microbial ribonucleases"/>
    <property type="match status" value="1"/>
</dbReference>
<feature type="signal peptide" description="Or 43" evidence="2">
    <location>
        <begin position="1"/>
        <end position="36"/>
    </location>
</feature>
<feature type="chain" id="PRO_0000030830" description="Guanyl-specific ribonuclease Sa3">
    <location>
        <begin position="37"/>
        <end position="141"/>
    </location>
</feature>
<feature type="active site" description="Proton acceptor">
    <location>
        <position position="99"/>
    </location>
</feature>
<feature type="active site" description="Proton donor">
    <location>
        <position position="130"/>
    </location>
</feature>
<feature type="disulfide bond" evidence="1">
    <location>
        <begin position="52"/>
        <end position="141"/>
    </location>
</feature>
<feature type="strand" evidence="4">
    <location>
        <begin position="49"/>
        <end position="52"/>
    </location>
</feature>
<feature type="helix" evidence="4">
    <location>
        <begin position="53"/>
        <end position="55"/>
    </location>
</feature>
<feature type="helix" evidence="4">
    <location>
        <begin position="58"/>
        <end position="69"/>
    </location>
</feature>
<feature type="turn" evidence="4">
    <location>
        <begin position="76"/>
        <end position="79"/>
    </location>
</feature>
<feature type="strand" evidence="4">
    <location>
        <begin position="98"/>
        <end position="101"/>
    </location>
</feature>
<feature type="strand" evidence="4">
    <location>
        <begin position="114"/>
        <end position="117"/>
    </location>
</feature>
<feature type="strand" evidence="4">
    <location>
        <begin position="124"/>
        <end position="129"/>
    </location>
</feature>
<feature type="strand" evidence="4">
    <location>
        <begin position="135"/>
        <end position="138"/>
    </location>
</feature>
<organism>
    <name type="scientific">Kitasatospora aureofaciens</name>
    <name type="common">Streptomyces aureofaciens</name>
    <dbReference type="NCBI Taxonomy" id="1894"/>
    <lineage>
        <taxon>Bacteria</taxon>
        <taxon>Bacillati</taxon>
        <taxon>Actinomycetota</taxon>
        <taxon>Actinomycetes</taxon>
        <taxon>Kitasatosporales</taxon>
        <taxon>Streptomycetaceae</taxon>
        <taxon>Kitasatospora</taxon>
    </lineage>
</organism>
<gene>
    <name type="primary">rnaSA3</name>
</gene>
<accession>P30289</accession>
<reference key="1">
    <citation type="journal article" date="1992" name="Gene">
        <title>Cloning and sequencing of the gene encoding a ribonuclease from Streptomyces aureofaciens CCM3239.</title>
        <authorList>
            <person name="Homerova D."/>
            <person name="Hollaenderova Z."/>
            <person name="Kormanec J."/>
            <person name="Sevcik J."/>
        </authorList>
    </citation>
    <scope>NUCLEOTIDE SEQUENCE [GENOMIC DNA]</scope>
    <source>
        <strain>ATCC 10762 / DSM 40127 / CCM 3239 / JCM 4008 / LMG 5968 / NBRC 12843 / NCIMB 8234 / A-377</strain>
    </source>
</reference>
<reference key="2">
    <citation type="journal article" date="2002" name="J. Biol. Chem.">
        <title>X-ray structure of two crystalline forms of a streptomycete ribonuclease with cytotoxic activity.</title>
        <authorList>
            <person name="Sevcik J."/>
            <person name="Urbanikova L."/>
            <person name="Leland P.A."/>
            <person name="Raines R.T."/>
        </authorList>
    </citation>
    <scope>X-RAY CRYSTALLOGRAPHY (1.7 ANGSTROMS) OF 45-141</scope>
</reference>
<comment type="catalytic activity">
    <reaction>
        <text>[RNA] containing guanosine + H2O = an [RNA fragment]-3'-guanosine-3'-phosphate + a 5'-hydroxy-ribonucleotide-3'-[RNA fragment].</text>
        <dbReference type="EC" id="4.6.1.24"/>
    </reaction>
</comment>
<comment type="subcellular location">
    <subcellularLocation>
        <location>Secreted</location>
    </subcellularLocation>
</comment>
<comment type="similarity">
    <text evidence="3">Belongs to the ribonuclease N1/T1 family.</text>
</comment>
<comment type="sequence caution" evidence="3">
    <conflict type="frameshift">
        <sequence resource="EMBL-CDS" id="AAA26809"/>
    </conflict>
</comment>
<keyword id="KW-0002">3D-structure</keyword>
<keyword id="KW-1015">Disulfide bond</keyword>
<keyword id="KW-0255">Endonuclease</keyword>
<keyword id="KW-0378">Hydrolase</keyword>
<keyword id="KW-0456">Lyase</keyword>
<keyword id="KW-0540">Nuclease</keyword>
<keyword id="KW-0964">Secreted</keyword>
<keyword id="KW-0732">Signal</keyword>